<dbReference type="EC" id="1.15.1.1"/>
<dbReference type="EMBL" id="X96852">
    <property type="protein sequence ID" value="CAA65596.1"/>
    <property type="molecule type" value="Genomic_DNA"/>
</dbReference>
<dbReference type="RefSeq" id="WP_005175051.1">
    <property type="nucleotide sequence ID" value="NZ_NWMR01000012.1"/>
</dbReference>
<dbReference type="SMR" id="P53655"/>
<dbReference type="STRING" id="1443113.LC20_00043"/>
<dbReference type="eggNOG" id="COG0605">
    <property type="taxonomic scope" value="Bacteria"/>
</dbReference>
<dbReference type="GO" id="GO:0005737">
    <property type="term" value="C:cytoplasm"/>
    <property type="evidence" value="ECO:0007669"/>
    <property type="project" value="TreeGrafter"/>
</dbReference>
<dbReference type="GO" id="GO:0046872">
    <property type="term" value="F:metal ion binding"/>
    <property type="evidence" value="ECO:0007669"/>
    <property type="project" value="UniProtKB-KW"/>
</dbReference>
<dbReference type="GO" id="GO:0004784">
    <property type="term" value="F:superoxide dismutase activity"/>
    <property type="evidence" value="ECO:0007669"/>
    <property type="project" value="UniProtKB-EC"/>
</dbReference>
<dbReference type="FunFam" id="1.10.287.990:FF:000001">
    <property type="entry name" value="Superoxide dismutase"/>
    <property type="match status" value="1"/>
</dbReference>
<dbReference type="FunFam" id="3.55.40.20:FF:000001">
    <property type="entry name" value="Superoxide dismutase"/>
    <property type="match status" value="1"/>
</dbReference>
<dbReference type="Gene3D" id="1.10.287.990">
    <property type="entry name" value="Fe,Mn superoxide dismutase (SOD) domain"/>
    <property type="match status" value="1"/>
</dbReference>
<dbReference type="Gene3D" id="3.55.40.20">
    <property type="entry name" value="Iron/manganese superoxide dismutase, C-terminal domain"/>
    <property type="match status" value="1"/>
</dbReference>
<dbReference type="InterPro" id="IPR001189">
    <property type="entry name" value="Mn/Fe_SOD"/>
</dbReference>
<dbReference type="InterPro" id="IPR019833">
    <property type="entry name" value="Mn/Fe_SOD_BS"/>
</dbReference>
<dbReference type="InterPro" id="IPR019832">
    <property type="entry name" value="Mn/Fe_SOD_C"/>
</dbReference>
<dbReference type="InterPro" id="IPR019831">
    <property type="entry name" value="Mn/Fe_SOD_N"/>
</dbReference>
<dbReference type="InterPro" id="IPR036324">
    <property type="entry name" value="Mn/Fe_SOD_N_sf"/>
</dbReference>
<dbReference type="InterPro" id="IPR036314">
    <property type="entry name" value="SOD_C_sf"/>
</dbReference>
<dbReference type="NCBIfam" id="NF008177">
    <property type="entry name" value="PRK10925.1"/>
    <property type="match status" value="1"/>
</dbReference>
<dbReference type="PANTHER" id="PTHR43595">
    <property type="entry name" value="37S RIBOSOMAL PROTEIN S26, MITOCHONDRIAL"/>
    <property type="match status" value="1"/>
</dbReference>
<dbReference type="PANTHER" id="PTHR43595:SF2">
    <property type="entry name" value="SMALL RIBOSOMAL SUBUNIT PROTEIN MS42"/>
    <property type="match status" value="1"/>
</dbReference>
<dbReference type="Pfam" id="PF02777">
    <property type="entry name" value="Sod_Fe_C"/>
    <property type="match status" value="1"/>
</dbReference>
<dbReference type="Pfam" id="PF00081">
    <property type="entry name" value="Sod_Fe_N"/>
    <property type="match status" value="1"/>
</dbReference>
<dbReference type="PIRSF" id="PIRSF000349">
    <property type="entry name" value="SODismutase"/>
    <property type="match status" value="1"/>
</dbReference>
<dbReference type="PRINTS" id="PR01703">
    <property type="entry name" value="MNSODISMTASE"/>
</dbReference>
<dbReference type="SUPFAM" id="SSF54719">
    <property type="entry name" value="Fe,Mn superoxide dismutase (SOD), C-terminal domain"/>
    <property type="match status" value="1"/>
</dbReference>
<dbReference type="SUPFAM" id="SSF46609">
    <property type="entry name" value="Fe,Mn superoxide dismutase (SOD), N-terminal domain"/>
    <property type="match status" value="1"/>
</dbReference>
<dbReference type="PROSITE" id="PS00088">
    <property type="entry name" value="SOD_MN"/>
    <property type="match status" value="1"/>
</dbReference>
<comment type="function">
    <text>Destroys superoxide anion radicals which are normally produced within the cells and which are toxic to biological systems.</text>
</comment>
<comment type="catalytic activity">
    <reaction>
        <text>2 superoxide + 2 H(+) = H2O2 + O2</text>
        <dbReference type="Rhea" id="RHEA:20696"/>
        <dbReference type="ChEBI" id="CHEBI:15378"/>
        <dbReference type="ChEBI" id="CHEBI:15379"/>
        <dbReference type="ChEBI" id="CHEBI:16240"/>
        <dbReference type="ChEBI" id="CHEBI:18421"/>
        <dbReference type="EC" id="1.15.1.1"/>
    </reaction>
</comment>
<comment type="cofactor">
    <cofactor evidence="1">
        <name>Mn(2+)</name>
        <dbReference type="ChEBI" id="CHEBI:29035"/>
    </cofactor>
    <text evidence="1">Binds 1 Mn(2+) ion per subunit.</text>
</comment>
<comment type="similarity">
    <text evidence="2">Belongs to the iron/manganese superoxide dismutase family.</text>
</comment>
<protein>
    <recommendedName>
        <fullName>Superoxide dismutase [Mn]</fullName>
        <ecNumber>1.15.1.1</ecNumber>
    </recommendedName>
</protein>
<organism>
    <name type="scientific">Yersinia enterocolitica</name>
    <dbReference type="NCBI Taxonomy" id="630"/>
    <lineage>
        <taxon>Bacteria</taxon>
        <taxon>Pseudomonadati</taxon>
        <taxon>Pseudomonadota</taxon>
        <taxon>Gammaproteobacteria</taxon>
        <taxon>Enterobacterales</taxon>
        <taxon>Yersiniaceae</taxon>
        <taxon>Yersinia</taxon>
    </lineage>
</organism>
<name>SODM_YEREN</name>
<accession>P53655</accession>
<gene>
    <name type="primary">sodA</name>
</gene>
<evidence type="ECO:0000250" key="1"/>
<evidence type="ECO:0000305" key="2"/>
<keyword id="KW-0464">Manganese</keyword>
<keyword id="KW-0479">Metal-binding</keyword>
<keyword id="KW-0560">Oxidoreductase</keyword>
<reference key="1">
    <citation type="journal article" date="1997" name="Infect. Immun.">
        <title>Contribution of the Mn-cofactored superoxide dismutase (SodA) to the virulence of Yersinia enterocolitica serotype O8.</title>
        <authorList>
            <person name="Roggenkamp A."/>
            <person name="Bittner T."/>
            <person name="Leitritz L."/>
            <person name="Sing A."/>
            <person name="Heesemann J."/>
        </authorList>
    </citation>
    <scope>NUCLEOTIDE SEQUENCE [GENOMIC DNA]</scope>
    <source>
        <strain>ATCC 51871 / WA-314 / Serotype O:8</strain>
    </source>
</reference>
<proteinExistence type="inferred from homology"/>
<sequence length="207" mass="23229">MSYSLPSLPYAYDALEPHFDKQTMEIHHTKHHQTYVNNANTVLESFPELAKFSVEDLIKDLDKVPAEKRTFMRNNAGGHANHSLFWKGLKLGTTLTGDLKAAIERDFGSVDSFKEKFEAAAATRFGSGWAWLVLKDDGKLAVVSTANQDSPLMGEAVSGASGFPIVGLDVWEHAYYLKFQNRRPDYIKAFWNVVNWDEAAARFAQAK</sequence>
<feature type="chain" id="PRO_0000160111" description="Superoxide dismutase [Mn]">
    <location>
        <begin position="1"/>
        <end position="207"/>
    </location>
</feature>
<feature type="binding site" evidence="1">
    <location>
        <position position="27"/>
    </location>
    <ligand>
        <name>Mn(2+)</name>
        <dbReference type="ChEBI" id="CHEBI:29035"/>
    </ligand>
</feature>
<feature type="binding site" evidence="1">
    <location>
        <position position="82"/>
    </location>
    <ligand>
        <name>Mn(2+)</name>
        <dbReference type="ChEBI" id="CHEBI:29035"/>
    </ligand>
</feature>
<feature type="binding site" evidence="1">
    <location>
        <position position="169"/>
    </location>
    <ligand>
        <name>Mn(2+)</name>
        <dbReference type="ChEBI" id="CHEBI:29035"/>
    </ligand>
</feature>
<feature type="binding site" evidence="1">
    <location>
        <position position="173"/>
    </location>
    <ligand>
        <name>Mn(2+)</name>
        <dbReference type="ChEBI" id="CHEBI:29035"/>
    </ligand>
</feature>